<accession>A1RRJ5</accession>
<name>KCY_PYRIL</name>
<organism>
    <name type="scientific">Pyrobaculum islandicum (strain DSM 4184 / JCM 9189 / GEO3)</name>
    <dbReference type="NCBI Taxonomy" id="384616"/>
    <lineage>
        <taxon>Archaea</taxon>
        <taxon>Thermoproteota</taxon>
        <taxon>Thermoprotei</taxon>
        <taxon>Thermoproteales</taxon>
        <taxon>Thermoproteaceae</taxon>
        <taxon>Pyrobaculum</taxon>
    </lineage>
</organism>
<reference key="1">
    <citation type="submission" date="2006-12" db="EMBL/GenBank/DDBJ databases">
        <title>Complete sequence of Pyrobaculum islandicum DSM 4184.</title>
        <authorList>
            <person name="Copeland A."/>
            <person name="Lucas S."/>
            <person name="Lapidus A."/>
            <person name="Barry K."/>
            <person name="Detter J.C."/>
            <person name="Glavina del Rio T."/>
            <person name="Dalin E."/>
            <person name="Tice H."/>
            <person name="Pitluck S."/>
            <person name="Meincke L."/>
            <person name="Brettin T."/>
            <person name="Bruce D."/>
            <person name="Han C."/>
            <person name="Tapia R."/>
            <person name="Gilna P."/>
            <person name="Schmutz J."/>
            <person name="Larimer F."/>
            <person name="Land M."/>
            <person name="Hauser L."/>
            <person name="Kyrpides N."/>
            <person name="Mikhailova N."/>
            <person name="Cozen A.E."/>
            <person name="Fitz-Gibbon S.T."/>
            <person name="House C.H."/>
            <person name="Saltikov C."/>
            <person name="Lowe T."/>
            <person name="Richardson P."/>
        </authorList>
    </citation>
    <scope>NUCLEOTIDE SEQUENCE [LARGE SCALE GENOMIC DNA]</scope>
    <source>
        <strain>DSM 4184 / JCM 9189 / GEO3</strain>
    </source>
</reference>
<dbReference type="EC" id="2.7.4.25" evidence="1"/>
<dbReference type="EMBL" id="CP000504">
    <property type="protein sequence ID" value="ABL87577.1"/>
    <property type="molecule type" value="Genomic_DNA"/>
</dbReference>
<dbReference type="RefSeq" id="WP_011762154.1">
    <property type="nucleotide sequence ID" value="NC_008701.1"/>
</dbReference>
<dbReference type="SMR" id="A1RRJ5"/>
<dbReference type="STRING" id="384616.Pisl_0399"/>
<dbReference type="GeneID" id="4616618"/>
<dbReference type="KEGG" id="pis:Pisl_0399"/>
<dbReference type="eggNOG" id="arCOG01037">
    <property type="taxonomic scope" value="Archaea"/>
</dbReference>
<dbReference type="HOGENOM" id="CLU_079959_1_0_2"/>
<dbReference type="OrthoDB" id="31096at2157"/>
<dbReference type="Proteomes" id="UP000002595">
    <property type="component" value="Chromosome"/>
</dbReference>
<dbReference type="GO" id="GO:0005737">
    <property type="term" value="C:cytoplasm"/>
    <property type="evidence" value="ECO:0007669"/>
    <property type="project" value="UniProtKB-SubCell"/>
</dbReference>
<dbReference type="GO" id="GO:0005524">
    <property type="term" value="F:ATP binding"/>
    <property type="evidence" value="ECO:0007669"/>
    <property type="project" value="UniProtKB-UniRule"/>
</dbReference>
<dbReference type="GO" id="GO:0036430">
    <property type="term" value="F:CMP kinase activity"/>
    <property type="evidence" value="ECO:0007669"/>
    <property type="project" value="RHEA"/>
</dbReference>
<dbReference type="GO" id="GO:0036431">
    <property type="term" value="F:dCMP kinase activity"/>
    <property type="evidence" value="ECO:0007669"/>
    <property type="project" value="RHEA"/>
</dbReference>
<dbReference type="GO" id="GO:0006220">
    <property type="term" value="P:pyrimidine nucleotide metabolic process"/>
    <property type="evidence" value="ECO:0007669"/>
    <property type="project" value="UniProtKB-UniRule"/>
</dbReference>
<dbReference type="CDD" id="cd02020">
    <property type="entry name" value="CMPK"/>
    <property type="match status" value="1"/>
</dbReference>
<dbReference type="Gene3D" id="3.40.50.300">
    <property type="entry name" value="P-loop containing nucleotide triphosphate hydrolases"/>
    <property type="match status" value="1"/>
</dbReference>
<dbReference type="HAMAP" id="MF_00239">
    <property type="entry name" value="Cytidyl_kinase_type2"/>
    <property type="match status" value="1"/>
</dbReference>
<dbReference type="InterPro" id="IPR011892">
    <property type="entry name" value="Cyt_kin_arch"/>
</dbReference>
<dbReference type="InterPro" id="IPR011994">
    <property type="entry name" value="Cytidylate_kinase_dom"/>
</dbReference>
<dbReference type="InterPro" id="IPR027417">
    <property type="entry name" value="P-loop_NTPase"/>
</dbReference>
<dbReference type="NCBIfam" id="TIGR02173">
    <property type="entry name" value="cyt_kin_arch"/>
    <property type="match status" value="1"/>
</dbReference>
<dbReference type="Pfam" id="PF13207">
    <property type="entry name" value="AAA_17"/>
    <property type="match status" value="1"/>
</dbReference>
<dbReference type="SUPFAM" id="SSF52540">
    <property type="entry name" value="P-loop containing nucleoside triphosphate hydrolases"/>
    <property type="match status" value="1"/>
</dbReference>
<feature type="chain" id="PRO_1000005685" description="Cytidylate kinase">
    <location>
        <begin position="1"/>
        <end position="184"/>
    </location>
</feature>
<feature type="binding site" evidence="1">
    <location>
        <begin position="8"/>
        <end position="16"/>
    </location>
    <ligand>
        <name>ATP</name>
        <dbReference type="ChEBI" id="CHEBI:30616"/>
    </ligand>
</feature>
<protein>
    <recommendedName>
        <fullName evidence="1">Cytidylate kinase</fullName>
        <shortName evidence="1">CK</shortName>
        <ecNumber evidence="1">2.7.4.25</ecNumber>
    </recommendedName>
    <alternativeName>
        <fullName evidence="1">Cytidine monophosphate kinase</fullName>
        <shortName evidence="1">CMP kinase</shortName>
    </alternativeName>
</protein>
<proteinExistence type="inferred from homology"/>
<evidence type="ECO:0000255" key="1">
    <source>
        <dbReference type="HAMAP-Rule" id="MF_00239"/>
    </source>
</evidence>
<comment type="catalytic activity">
    <reaction evidence="1">
        <text>CMP + ATP = CDP + ADP</text>
        <dbReference type="Rhea" id="RHEA:11600"/>
        <dbReference type="ChEBI" id="CHEBI:30616"/>
        <dbReference type="ChEBI" id="CHEBI:58069"/>
        <dbReference type="ChEBI" id="CHEBI:60377"/>
        <dbReference type="ChEBI" id="CHEBI:456216"/>
        <dbReference type="EC" id="2.7.4.25"/>
    </reaction>
</comment>
<comment type="catalytic activity">
    <reaction evidence="1">
        <text>dCMP + ATP = dCDP + ADP</text>
        <dbReference type="Rhea" id="RHEA:25094"/>
        <dbReference type="ChEBI" id="CHEBI:30616"/>
        <dbReference type="ChEBI" id="CHEBI:57566"/>
        <dbReference type="ChEBI" id="CHEBI:58593"/>
        <dbReference type="ChEBI" id="CHEBI:456216"/>
        <dbReference type="EC" id="2.7.4.25"/>
    </reaction>
</comment>
<comment type="subcellular location">
    <subcellularLocation>
        <location evidence="1">Cytoplasm</location>
    </subcellularLocation>
</comment>
<comment type="similarity">
    <text evidence="1">Belongs to the cytidylate kinase family. Type 2 subfamily.</text>
</comment>
<sequence>MVVIAISGQPGSGKTTVAREVARVLNLPLVSSGSLFRELAAKMGIDFIEFHKYAEKNPDIDKVVDSMAIERAKAGNVVLEGHLAAWIVRPYADICIYLKASSEIRARRISIRDKKSFEDALREVREREELNRRRYLSLYNIDINDLSVFDLVLDTSYLSINDAIRISLDYICTVLGFKYSRKFC</sequence>
<keyword id="KW-0067">ATP-binding</keyword>
<keyword id="KW-0963">Cytoplasm</keyword>
<keyword id="KW-0418">Kinase</keyword>
<keyword id="KW-0547">Nucleotide-binding</keyword>
<keyword id="KW-0808">Transferase</keyword>
<gene>
    <name evidence="1" type="primary">cmk</name>
    <name type="ordered locus">Pisl_0399</name>
</gene>